<name>LSM2_HUMAN</name>
<dbReference type="EMBL" id="AF182288">
    <property type="protein sequence ID" value="AAD56226.1"/>
    <property type="molecule type" value="mRNA"/>
</dbReference>
<dbReference type="EMBL" id="AJ245416">
    <property type="protein sequence ID" value="CAB52190.1"/>
    <property type="molecule type" value="mRNA"/>
</dbReference>
<dbReference type="EMBL" id="AF196468">
    <property type="protein sequence ID" value="AAG33023.1"/>
    <property type="molecule type" value="mRNA"/>
</dbReference>
<dbReference type="EMBL" id="AF134726">
    <property type="protein sequence ID" value="AAD21818.1"/>
    <property type="molecule type" value="Genomic_DNA"/>
</dbReference>
<dbReference type="EMBL" id="BA000025">
    <property type="protein sequence ID" value="BAB63302.1"/>
    <property type="molecule type" value="Genomic_DNA"/>
</dbReference>
<dbReference type="EMBL" id="AF136977">
    <property type="protein sequence ID" value="AAG49438.1"/>
    <property type="molecule type" value="mRNA"/>
</dbReference>
<dbReference type="EMBL" id="CR542146">
    <property type="protein sequence ID" value="CAG46943.1"/>
    <property type="molecule type" value="mRNA"/>
</dbReference>
<dbReference type="EMBL" id="CR542157">
    <property type="protein sequence ID" value="CAG46954.1"/>
    <property type="molecule type" value="mRNA"/>
</dbReference>
<dbReference type="EMBL" id="AL929592">
    <property type="status" value="NOT_ANNOTATED_CDS"/>
    <property type="molecule type" value="Genomic_DNA"/>
</dbReference>
<dbReference type="EMBL" id="CR759915">
    <property type="status" value="NOT_ANNOTATED_CDS"/>
    <property type="molecule type" value="Genomic_DNA"/>
</dbReference>
<dbReference type="EMBL" id="CR759787">
    <property type="status" value="NOT_ANNOTATED_CDS"/>
    <property type="molecule type" value="Genomic_DNA"/>
</dbReference>
<dbReference type="EMBL" id="CR925765">
    <property type="status" value="NOT_ANNOTATED_CDS"/>
    <property type="molecule type" value="Genomic_DNA"/>
</dbReference>
<dbReference type="EMBL" id="CH471081">
    <property type="protein sequence ID" value="EAX03525.1"/>
    <property type="molecule type" value="Genomic_DNA"/>
</dbReference>
<dbReference type="EMBL" id="BC009192">
    <property type="protein sequence ID" value="AAH09192.1"/>
    <property type="molecule type" value="mRNA"/>
</dbReference>
<dbReference type="CCDS" id="CCDS4722.1"/>
<dbReference type="RefSeq" id="NP_067000.1">
    <property type="nucleotide sequence ID" value="NM_021177.5"/>
</dbReference>
<dbReference type="PDB" id="3JCR">
    <property type="method" value="EM"/>
    <property type="resolution" value="7.00 A"/>
    <property type="chains" value="2=1-95"/>
</dbReference>
<dbReference type="PDB" id="5O9Z">
    <property type="method" value="EM"/>
    <property type="resolution" value="4.50 A"/>
    <property type="chains" value="o=1-95"/>
</dbReference>
<dbReference type="PDB" id="6AH0">
    <property type="method" value="EM"/>
    <property type="resolution" value="5.70 A"/>
    <property type="chains" value="q=1-95"/>
</dbReference>
<dbReference type="PDB" id="6AHD">
    <property type="method" value="EM"/>
    <property type="resolution" value="3.80 A"/>
    <property type="chains" value="q=1-95"/>
</dbReference>
<dbReference type="PDB" id="6QW6">
    <property type="method" value="EM"/>
    <property type="resolution" value="2.92 A"/>
    <property type="chains" value="62=1-95"/>
</dbReference>
<dbReference type="PDB" id="6QX9">
    <property type="method" value="EM"/>
    <property type="resolution" value="3.28 A"/>
    <property type="chains" value="62=1-95"/>
</dbReference>
<dbReference type="PDB" id="7ABG">
    <property type="method" value="EM"/>
    <property type="resolution" value="7.80 A"/>
    <property type="chains" value="V=1-95"/>
</dbReference>
<dbReference type="PDB" id="8H6E">
    <property type="method" value="EM"/>
    <property type="resolution" value="3.20 A"/>
    <property type="chains" value="6a=1-95"/>
</dbReference>
<dbReference type="PDB" id="8H6J">
    <property type="method" value="EM"/>
    <property type="resolution" value="3.25 A"/>
    <property type="chains" value="6a=1-95"/>
</dbReference>
<dbReference type="PDB" id="8H6K">
    <property type="method" value="EM"/>
    <property type="resolution" value="2.70 A"/>
    <property type="chains" value="6a=1-95"/>
</dbReference>
<dbReference type="PDB" id="8H6L">
    <property type="method" value="EM"/>
    <property type="resolution" value="2.60 A"/>
    <property type="chains" value="6a=1-95"/>
</dbReference>
<dbReference type="PDB" id="8QO9">
    <property type="method" value="EM"/>
    <property type="resolution" value="5.29 A"/>
    <property type="chains" value="62=1-95"/>
</dbReference>
<dbReference type="PDB" id="8QXD">
    <property type="method" value="EM"/>
    <property type="resolution" value="9.60 A"/>
    <property type="chains" value="62=1-95"/>
</dbReference>
<dbReference type="PDB" id="8QZS">
    <property type="method" value="EM"/>
    <property type="resolution" value="4.10 A"/>
    <property type="chains" value="62=1-95"/>
</dbReference>
<dbReference type="PDB" id="8R08">
    <property type="method" value="EM"/>
    <property type="resolution" value="6.10 A"/>
    <property type="chains" value="62=1-95"/>
</dbReference>
<dbReference type="PDB" id="8R09">
    <property type="method" value="EM"/>
    <property type="resolution" value="4.30 A"/>
    <property type="chains" value="62=1-95"/>
</dbReference>
<dbReference type="PDB" id="8R0A">
    <property type="method" value="EM"/>
    <property type="resolution" value="5.80 A"/>
    <property type="chains" value="62=1-95"/>
</dbReference>
<dbReference type="PDB" id="8R0B">
    <property type="method" value="EM"/>
    <property type="resolution" value="4.40 A"/>
    <property type="chains" value="62=1-95"/>
</dbReference>
<dbReference type="PDB" id="8RM5">
    <property type="method" value="EM"/>
    <property type="resolution" value="6.90 A"/>
    <property type="chains" value="62=1-95"/>
</dbReference>
<dbReference type="PDBsum" id="3JCR"/>
<dbReference type="PDBsum" id="5O9Z"/>
<dbReference type="PDBsum" id="6AH0"/>
<dbReference type="PDBsum" id="6AHD"/>
<dbReference type="PDBsum" id="6QW6"/>
<dbReference type="PDBsum" id="6QX9"/>
<dbReference type="PDBsum" id="7ABG"/>
<dbReference type="PDBsum" id="8H6E"/>
<dbReference type="PDBsum" id="8H6J"/>
<dbReference type="PDBsum" id="8H6K"/>
<dbReference type="PDBsum" id="8H6L"/>
<dbReference type="PDBsum" id="8QO9"/>
<dbReference type="PDBsum" id="8QXD"/>
<dbReference type="PDBsum" id="8QZS"/>
<dbReference type="PDBsum" id="8R08"/>
<dbReference type="PDBsum" id="8R09"/>
<dbReference type="PDBsum" id="8R0A"/>
<dbReference type="PDBsum" id="8R0B"/>
<dbReference type="PDBsum" id="8RM5"/>
<dbReference type="EMDB" id="EMD-11695"/>
<dbReference type="EMDB" id="EMD-18529"/>
<dbReference type="EMDB" id="EMD-18718"/>
<dbReference type="EMDB" id="EMD-18781"/>
<dbReference type="EMDB" id="EMD-18786"/>
<dbReference type="EMDB" id="EMD-18787"/>
<dbReference type="EMDB" id="EMD-18788"/>
<dbReference type="EMDB" id="EMD-18789"/>
<dbReference type="EMDB" id="EMD-19349"/>
<dbReference type="EMDB" id="EMD-34500"/>
<dbReference type="EMDB" id="EMD-34505"/>
<dbReference type="EMDB" id="EMD-34507"/>
<dbReference type="EMDB" id="EMD-34508"/>
<dbReference type="EMDB" id="EMD-3766"/>
<dbReference type="EMDB" id="EMD-4658"/>
<dbReference type="EMDB" id="EMD-4665"/>
<dbReference type="EMDB" id="EMD-9621"/>
<dbReference type="EMDB" id="EMD-9624"/>
<dbReference type="SMR" id="Q9Y333"/>
<dbReference type="BioGRID" id="121778">
    <property type="interactions" value="179"/>
</dbReference>
<dbReference type="ComplexPortal" id="CPX-2391">
    <property type="entry name" value="U4/U6.U5 small nuclear ribonucleoprotein complex"/>
</dbReference>
<dbReference type="CORUM" id="Q9Y333"/>
<dbReference type="DIP" id="DIP-31139N"/>
<dbReference type="FunCoup" id="Q9Y333">
    <property type="interactions" value="2796"/>
</dbReference>
<dbReference type="IntAct" id="Q9Y333">
    <property type="interactions" value="75"/>
</dbReference>
<dbReference type="MINT" id="Q9Y333"/>
<dbReference type="STRING" id="9606.ENSP00000364813"/>
<dbReference type="GlyGen" id="Q9Y333">
    <property type="glycosylation" value="1 site, 1 O-linked glycan (1 site)"/>
</dbReference>
<dbReference type="iPTMnet" id="Q9Y333"/>
<dbReference type="PhosphoSitePlus" id="Q9Y333"/>
<dbReference type="SwissPalm" id="Q9Y333"/>
<dbReference type="BioMuta" id="LSM2"/>
<dbReference type="DMDM" id="10720079"/>
<dbReference type="jPOST" id="Q9Y333"/>
<dbReference type="MassIVE" id="Q9Y333"/>
<dbReference type="PaxDb" id="9606-ENSP00000364813"/>
<dbReference type="PeptideAtlas" id="Q9Y333"/>
<dbReference type="ProteomicsDB" id="85967"/>
<dbReference type="Pumba" id="Q9Y333"/>
<dbReference type="TopDownProteomics" id="Q9Y333"/>
<dbReference type="Antibodypedia" id="27800">
    <property type="antibodies" value="196 antibodies from 33 providers"/>
</dbReference>
<dbReference type="DNASU" id="57819"/>
<dbReference type="Ensembl" id="ENST00000375661.6">
    <property type="protein sequence ID" value="ENSP00000364813.5"/>
    <property type="gene ID" value="ENSG00000204392.11"/>
</dbReference>
<dbReference type="Ensembl" id="ENST00000383391.4">
    <property type="protein sequence ID" value="ENSP00000372883.4"/>
    <property type="gene ID" value="ENSG00000172850.11"/>
</dbReference>
<dbReference type="Ensembl" id="ENST00000424975.2">
    <property type="protein sequence ID" value="ENSP00000403345.2"/>
    <property type="gene ID" value="ENSG00000231502.6"/>
</dbReference>
<dbReference type="Ensembl" id="ENST00000432122.2">
    <property type="protein sequence ID" value="ENSP00000414006.2"/>
    <property type="gene ID" value="ENSG00000224979.6"/>
</dbReference>
<dbReference type="Ensembl" id="ENST00000434125.2">
    <property type="protein sequence ID" value="ENSP00000406280.2"/>
    <property type="gene ID" value="ENSG00000225998.6"/>
</dbReference>
<dbReference type="Ensembl" id="ENST00000455705.2">
    <property type="protein sequence ID" value="ENSP00000414634.2"/>
    <property type="gene ID" value="ENSG00000236826.7"/>
</dbReference>
<dbReference type="GeneID" id="57819"/>
<dbReference type="KEGG" id="hsa:57819"/>
<dbReference type="MANE-Select" id="ENST00000375661.6">
    <property type="protein sequence ID" value="ENSP00000364813.5"/>
    <property type="RefSeq nucleotide sequence ID" value="NM_021177.5"/>
    <property type="RefSeq protein sequence ID" value="NP_067000.1"/>
</dbReference>
<dbReference type="UCSC" id="uc003nxg.4">
    <property type="organism name" value="human"/>
</dbReference>
<dbReference type="AGR" id="HGNC:13940"/>
<dbReference type="CTD" id="57819"/>
<dbReference type="DisGeNET" id="57819"/>
<dbReference type="GeneCards" id="LSM2"/>
<dbReference type="HGNC" id="HGNC:13940">
    <property type="gene designation" value="LSM2"/>
</dbReference>
<dbReference type="HPA" id="ENSG00000204392">
    <property type="expression patterns" value="Low tissue specificity"/>
</dbReference>
<dbReference type="MIM" id="607282">
    <property type="type" value="gene"/>
</dbReference>
<dbReference type="neXtProt" id="NX_Q9Y333"/>
<dbReference type="OpenTargets" id="ENSG00000204392"/>
<dbReference type="PharmGKB" id="PA25929"/>
<dbReference type="VEuPathDB" id="HostDB:ENSG00000204392"/>
<dbReference type="eggNOG" id="KOG3448">
    <property type="taxonomic scope" value="Eukaryota"/>
</dbReference>
<dbReference type="GeneTree" id="ENSGT00390000016597"/>
<dbReference type="HOGENOM" id="CLU_130474_3_0_1"/>
<dbReference type="InParanoid" id="Q9Y333"/>
<dbReference type="OMA" id="DNISCTD"/>
<dbReference type="OrthoDB" id="10256176at2759"/>
<dbReference type="PAN-GO" id="Q9Y333">
    <property type="GO annotations" value="8 GO annotations based on evolutionary models"/>
</dbReference>
<dbReference type="PhylomeDB" id="Q9Y333"/>
<dbReference type="TreeFam" id="TF314960"/>
<dbReference type="PathwayCommons" id="Q9Y333"/>
<dbReference type="Reactome" id="R-HSA-430039">
    <property type="pathway name" value="mRNA decay by 5' to 3' exoribonuclease"/>
</dbReference>
<dbReference type="Reactome" id="R-HSA-72163">
    <property type="pathway name" value="mRNA Splicing - Major Pathway"/>
</dbReference>
<dbReference type="SignaLink" id="Q9Y333"/>
<dbReference type="SIGNOR" id="Q9Y333"/>
<dbReference type="BioGRID-ORCS" id="57819">
    <property type="hits" value="822 hits in 1135 CRISPR screens"/>
</dbReference>
<dbReference type="CD-CODE" id="232F8A39">
    <property type="entry name" value="P-body"/>
</dbReference>
<dbReference type="CD-CODE" id="91857CE7">
    <property type="entry name" value="Nucleolus"/>
</dbReference>
<dbReference type="ChiTaRS" id="LSM2">
    <property type="organism name" value="human"/>
</dbReference>
<dbReference type="GeneWiki" id="LSM2"/>
<dbReference type="GenomeRNAi" id="57819"/>
<dbReference type="Pharos" id="Q9Y333">
    <property type="development level" value="Tbio"/>
</dbReference>
<dbReference type="PRO" id="PR:Q9Y333"/>
<dbReference type="Proteomes" id="UP000005640">
    <property type="component" value="Chromosome 6"/>
</dbReference>
<dbReference type="RNAct" id="Q9Y333">
    <property type="molecule type" value="protein"/>
</dbReference>
<dbReference type="Bgee" id="ENSG00000204392">
    <property type="expression patterns" value="Expressed in ventricular zone and 97 other cell types or tissues"/>
</dbReference>
<dbReference type="GO" id="GO:0071013">
    <property type="term" value="C:catalytic step 2 spliceosome"/>
    <property type="evidence" value="ECO:0000314"/>
    <property type="project" value="UniProtKB"/>
</dbReference>
<dbReference type="GO" id="GO:0005737">
    <property type="term" value="C:cytoplasm"/>
    <property type="evidence" value="ECO:0000314"/>
    <property type="project" value="MGI"/>
</dbReference>
<dbReference type="GO" id="GO:0005829">
    <property type="term" value="C:cytosol"/>
    <property type="evidence" value="ECO:0000304"/>
    <property type="project" value="Reactome"/>
</dbReference>
<dbReference type="GO" id="GO:1990726">
    <property type="term" value="C:Lsm1-7-Pat1 complex"/>
    <property type="evidence" value="ECO:0000318"/>
    <property type="project" value="GO_Central"/>
</dbReference>
<dbReference type="GO" id="GO:0120115">
    <property type="term" value="C:Lsm2-8 complex"/>
    <property type="evidence" value="ECO:0000314"/>
    <property type="project" value="UniProtKB"/>
</dbReference>
<dbReference type="GO" id="GO:0005654">
    <property type="term" value="C:nucleoplasm"/>
    <property type="evidence" value="ECO:0000314"/>
    <property type="project" value="HPA"/>
</dbReference>
<dbReference type="GO" id="GO:0005634">
    <property type="term" value="C:nucleus"/>
    <property type="evidence" value="ECO:0000314"/>
    <property type="project" value="UniProtKB"/>
</dbReference>
<dbReference type="GO" id="GO:0000932">
    <property type="term" value="C:P-body"/>
    <property type="evidence" value="ECO:0000318"/>
    <property type="project" value="GO_Central"/>
</dbReference>
<dbReference type="GO" id="GO:0071011">
    <property type="term" value="C:precatalytic spliceosome"/>
    <property type="evidence" value="ECO:0000318"/>
    <property type="project" value="GO_Central"/>
</dbReference>
<dbReference type="GO" id="GO:0071005">
    <property type="term" value="C:U2-type precatalytic spliceosome"/>
    <property type="evidence" value="ECO:0000314"/>
    <property type="project" value="UniProtKB"/>
</dbReference>
<dbReference type="GO" id="GO:0046540">
    <property type="term" value="C:U4/U6 x U5 tri-snRNP complex"/>
    <property type="evidence" value="ECO:0000314"/>
    <property type="project" value="UniProtKB"/>
</dbReference>
<dbReference type="GO" id="GO:0005688">
    <property type="term" value="C:U6 snRNP"/>
    <property type="evidence" value="ECO:0000318"/>
    <property type="project" value="GO_Central"/>
</dbReference>
<dbReference type="GO" id="GO:0003723">
    <property type="term" value="F:RNA binding"/>
    <property type="evidence" value="ECO:0007005"/>
    <property type="project" value="UniProtKB"/>
</dbReference>
<dbReference type="GO" id="GO:0031267">
    <property type="term" value="F:small GTPase binding"/>
    <property type="evidence" value="ECO:0000353"/>
    <property type="project" value="UniProtKB"/>
</dbReference>
<dbReference type="GO" id="GO:0017070">
    <property type="term" value="F:U6 snRNA binding"/>
    <property type="evidence" value="ECO:0000303"/>
    <property type="project" value="UniProtKB"/>
</dbReference>
<dbReference type="GO" id="GO:0006402">
    <property type="term" value="P:mRNA catabolic process"/>
    <property type="evidence" value="ECO:0000314"/>
    <property type="project" value="MGI"/>
</dbReference>
<dbReference type="GO" id="GO:0000398">
    <property type="term" value="P:mRNA splicing, via spliceosome"/>
    <property type="evidence" value="ECO:0000314"/>
    <property type="project" value="UniProtKB"/>
</dbReference>
<dbReference type="GO" id="GO:0000244">
    <property type="term" value="P:spliceosomal tri-snRNP complex assembly"/>
    <property type="evidence" value="ECO:0000314"/>
    <property type="project" value="MGI"/>
</dbReference>
<dbReference type="CDD" id="cd01725">
    <property type="entry name" value="LSm2"/>
    <property type="match status" value="1"/>
</dbReference>
<dbReference type="FunFam" id="2.30.30.100:FF:000009">
    <property type="entry name" value="U6 snRNA-associated Sm-like protein LSm2"/>
    <property type="match status" value="1"/>
</dbReference>
<dbReference type="Gene3D" id="2.30.30.100">
    <property type="match status" value="1"/>
</dbReference>
<dbReference type="InterPro" id="IPR010920">
    <property type="entry name" value="LSM_dom_sf"/>
</dbReference>
<dbReference type="InterPro" id="IPR047575">
    <property type="entry name" value="Sm"/>
</dbReference>
<dbReference type="InterPro" id="IPR001163">
    <property type="entry name" value="Sm_dom_euk/arc"/>
</dbReference>
<dbReference type="InterPro" id="IPR016654">
    <property type="entry name" value="U6_snRNA_Lsm2"/>
</dbReference>
<dbReference type="PANTHER" id="PTHR13829">
    <property type="entry name" value="SNRNP CORE PROTEIN FAMILY MEMBER"/>
    <property type="match status" value="1"/>
</dbReference>
<dbReference type="PANTHER" id="PTHR13829:SF2">
    <property type="entry name" value="U6 SNRNA-ASSOCIATED SM-LIKE PROTEIN LSM2"/>
    <property type="match status" value="1"/>
</dbReference>
<dbReference type="Pfam" id="PF01423">
    <property type="entry name" value="LSM"/>
    <property type="match status" value="1"/>
</dbReference>
<dbReference type="PIRSF" id="PIRSF016394">
    <property type="entry name" value="U6_snRNA_Lsm2"/>
    <property type="match status" value="1"/>
</dbReference>
<dbReference type="SMART" id="SM00651">
    <property type="entry name" value="Sm"/>
    <property type="match status" value="1"/>
</dbReference>
<dbReference type="SUPFAM" id="SSF50182">
    <property type="entry name" value="Sm-like ribonucleoproteins"/>
    <property type="match status" value="1"/>
</dbReference>
<dbReference type="PROSITE" id="PS52002">
    <property type="entry name" value="SM"/>
    <property type="match status" value="1"/>
</dbReference>
<proteinExistence type="evidence at protein level"/>
<feature type="chain" id="PRO_0000125556" description="U6 snRNA-associated Sm-like protein LSm2">
    <location>
        <begin position="1"/>
        <end position="95"/>
    </location>
</feature>
<feature type="domain" description="Sm" evidence="1">
    <location>
        <begin position="2"/>
        <end position="76"/>
    </location>
</feature>
<feature type="modified residue" description="Phosphothreonine" evidence="9">
    <location>
        <position position="79"/>
    </location>
</feature>
<organism>
    <name type="scientific">Homo sapiens</name>
    <name type="common">Human</name>
    <dbReference type="NCBI Taxonomy" id="9606"/>
    <lineage>
        <taxon>Eukaryota</taxon>
        <taxon>Metazoa</taxon>
        <taxon>Chordata</taxon>
        <taxon>Craniata</taxon>
        <taxon>Vertebrata</taxon>
        <taxon>Euteleostomi</taxon>
        <taxon>Mammalia</taxon>
        <taxon>Eutheria</taxon>
        <taxon>Euarchontoglires</taxon>
        <taxon>Primates</taxon>
        <taxon>Haplorrhini</taxon>
        <taxon>Catarrhini</taxon>
        <taxon>Hominidae</taxon>
        <taxon>Homo</taxon>
    </lineage>
</organism>
<sequence length="95" mass="10835">MLFYSFFKSLVGKDVVVELKNDLSICGTLHSVDQYLNIKLTDISVTDPEKYPHMLSVKNCFIRGSVVRYVQLPADEVDTQLLQDAARKEALQQKQ</sequence>
<gene>
    <name type="primary">LSM2</name>
    <name type="synonym">C6orf28</name>
    <name type="synonym">G7B</name>
</gene>
<keyword id="KW-0002">3D-structure</keyword>
<keyword id="KW-0903">Direct protein sequencing</keyword>
<keyword id="KW-0507">mRNA processing</keyword>
<keyword id="KW-0508">mRNA splicing</keyword>
<keyword id="KW-0539">Nucleus</keyword>
<keyword id="KW-0597">Phosphoprotein</keyword>
<keyword id="KW-1267">Proteomics identification</keyword>
<keyword id="KW-1185">Reference proteome</keyword>
<keyword id="KW-0687">Ribonucleoprotein</keyword>
<keyword id="KW-0694">RNA-binding</keyword>
<keyword id="KW-0747">Spliceosome</keyword>
<protein>
    <recommendedName>
        <fullName>U6 snRNA-associated Sm-like protein LSm2</fullName>
    </recommendedName>
    <alternativeName>
        <fullName>Protein G7b</fullName>
    </alternativeName>
    <alternativeName>
        <fullName>Small nuclear ribonuclear protein D homolog</fullName>
    </alternativeName>
    <alternativeName>
        <fullName>snRNP core Sm-like protein Sm-x5</fullName>
    </alternativeName>
</protein>
<accession>Q9Y333</accession>
<accession>Q6FGG1</accession>
<reference key="1">
    <citation type="journal article" date="1999" name="EMBO J.">
        <title>A doughnut-shaped heteromer of human Sm-like proteins binds to the 3'-end of U6 snRNA, thereby facilitating U4/U6 duplex formation in vitro.</title>
        <authorList>
            <person name="Achsel T."/>
            <person name="Brahms H."/>
            <person name="Kastner B."/>
            <person name="Bachi A."/>
            <person name="Wilm M."/>
            <person name="Luehrmann R."/>
        </authorList>
    </citation>
    <scope>NUCLEOTIDE SEQUENCE [MRNA]</scope>
    <scope>PARTIAL PROTEIN SEQUENCE</scope>
    <scope>SUBUNIT</scope>
    <scope>FUNCTION</scope>
    <scope>SUBCELLULAR LOCATION</scope>
</reference>
<reference key="2">
    <citation type="submission" date="1999-08" db="EMBL/GenBank/DDBJ databases">
        <title>Characterisation of the novel gene G7b located in the class III region of the human major histocompatibility complex.</title>
        <authorList>
            <person name="Olavesen M.G."/>
            <person name="Campbell R.D."/>
        </authorList>
    </citation>
    <scope>NUCLEOTIDE SEQUENCE [MRNA]</scope>
</reference>
<reference key="3">
    <citation type="submission" date="1999-10" db="EMBL/GenBank/DDBJ databases">
        <title>Human SMX5 homolog.</title>
        <authorList>
            <person name="Schmarda A."/>
            <person name="Fresser F."/>
            <person name="Paulmichl M."/>
        </authorList>
    </citation>
    <scope>NUCLEOTIDE SEQUENCE [MRNA]</scope>
</reference>
<reference key="4">
    <citation type="journal article" date="2003" name="Genome Res.">
        <title>Analysis of the gene-dense major histocompatibility complex class III region and its comparison to mouse.</title>
        <authorList>
            <person name="Xie T."/>
            <person name="Rowen L."/>
            <person name="Aguado B."/>
            <person name="Ahearn M.E."/>
            <person name="Madan A."/>
            <person name="Qin S."/>
            <person name="Campbell R.D."/>
            <person name="Hood L."/>
        </authorList>
    </citation>
    <scope>NUCLEOTIDE SEQUENCE [LARGE SCALE GENOMIC DNA]</scope>
</reference>
<reference key="5">
    <citation type="submission" date="1999-09" db="EMBL/GenBank/DDBJ databases">
        <title>Homo sapiens 2,229,817bp genomic DNA of 6p21.3 HLA class I region.</title>
        <authorList>
            <person name="Shiina S."/>
            <person name="Tamiya G."/>
            <person name="Oka A."/>
            <person name="Inoko H."/>
        </authorList>
    </citation>
    <scope>NUCLEOTIDE SEQUENCE [LARGE SCALE GENOMIC DNA]</scope>
</reference>
<reference key="6">
    <citation type="journal article" date="2000" name="Proc. Natl. Acad. Sci. U.S.A.">
        <title>Gene expression profiling in the human hypothalamus-pituitary-adrenal axis and full-length cDNA cloning.</title>
        <authorList>
            <person name="Hu R.-M."/>
            <person name="Han Z.-G."/>
            <person name="Song H.-D."/>
            <person name="Peng Y.-D."/>
            <person name="Huang Q.-H."/>
            <person name="Ren S.-X."/>
            <person name="Gu Y.-J."/>
            <person name="Huang C.-H."/>
            <person name="Li Y.-B."/>
            <person name="Jiang C.-L."/>
            <person name="Fu G."/>
            <person name="Zhang Q.-H."/>
            <person name="Gu B.-W."/>
            <person name="Dai M."/>
            <person name="Mao Y.-F."/>
            <person name="Gao G.-F."/>
            <person name="Rong R."/>
            <person name="Ye M."/>
            <person name="Zhou J."/>
            <person name="Xu S.-H."/>
            <person name="Gu J."/>
            <person name="Shi J.-X."/>
            <person name="Jin W.-R."/>
            <person name="Zhang C.-K."/>
            <person name="Wu T.-M."/>
            <person name="Huang G.-Y."/>
            <person name="Chen Z."/>
            <person name="Chen M.-D."/>
            <person name="Chen J.-L."/>
        </authorList>
    </citation>
    <scope>NUCLEOTIDE SEQUENCE [LARGE SCALE MRNA]</scope>
    <source>
        <tissue>Hypothalamus</tissue>
    </source>
</reference>
<reference key="7">
    <citation type="submission" date="2004-06" db="EMBL/GenBank/DDBJ databases">
        <title>Cloning of human full open reading frames in Gateway(TM) system entry vector (pDONR201).</title>
        <authorList>
            <person name="Ebert L."/>
            <person name="Schick M."/>
            <person name="Neubert P."/>
            <person name="Schatten R."/>
            <person name="Henze S."/>
            <person name="Korn B."/>
        </authorList>
    </citation>
    <scope>NUCLEOTIDE SEQUENCE [LARGE SCALE MRNA]</scope>
</reference>
<reference key="8">
    <citation type="journal article" date="2003" name="Nature">
        <title>The DNA sequence and analysis of human chromosome 6.</title>
        <authorList>
            <person name="Mungall A.J."/>
            <person name="Palmer S.A."/>
            <person name="Sims S.K."/>
            <person name="Edwards C.A."/>
            <person name="Ashurst J.L."/>
            <person name="Wilming L."/>
            <person name="Jones M.C."/>
            <person name="Horton R."/>
            <person name="Hunt S.E."/>
            <person name="Scott C.E."/>
            <person name="Gilbert J.G.R."/>
            <person name="Clamp M.E."/>
            <person name="Bethel G."/>
            <person name="Milne S."/>
            <person name="Ainscough R."/>
            <person name="Almeida J.P."/>
            <person name="Ambrose K.D."/>
            <person name="Andrews T.D."/>
            <person name="Ashwell R.I.S."/>
            <person name="Babbage A.K."/>
            <person name="Bagguley C.L."/>
            <person name="Bailey J."/>
            <person name="Banerjee R."/>
            <person name="Barker D.J."/>
            <person name="Barlow K.F."/>
            <person name="Bates K."/>
            <person name="Beare D.M."/>
            <person name="Beasley H."/>
            <person name="Beasley O."/>
            <person name="Bird C.P."/>
            <person name="Blakey S.E."/>
            <person name="Bray-Allen S."/>
            <person name="Brook J."/>
            <person name="Brown A.J."/>
            <person name="Brown J.Y."/>
            <person name="Burford D.C."/>
            <person name="Burrill W."/>
            <person name="Burton J."/>
            <person name="Carder C."/>
            <person name="Carter N.P."/>
            <person name="Chapman J.C."/>
            <person name="Clark S.Y."/>
            <person name="Clark G."/>
            <person name="Clee C.M."/>
            <person name="Clegg S."/>
            <person name="Cobley V."/>
            <person name="Collier R.E."/>
            <person name="Collins J.E."/>
            <person name="Colman L.K."/>
            <person name="Corby N.R."/>
            <person name="Coville G.J."/>
            <person name="Culley K.M."/>
            <person name="Dhami P."/>
            <person name="Davies J."/>
            <person name="Dunn M."/>
            <person name="Earthrowl M.E."/>
            <person name="Ellington A.E."/>
            <person name="Evans K.A."/>
            <person name="Faulkner L."/>
            <person name="Francis M.D."/>
            <person name="Frankish A."/>
            <person name="Frankland J."/>
            <person name="French L."/>
            <person name="Garner P."/>
            <person name="Garnett J."/>
            <person name="Ghori M.J."/>
            <person name="Gilby L.M."/>
            <person name="Gillson C.J."/>
            <person name="Glithero R.J."/>
            <person name="Grafham D.V."/>
            <person name="Grant M."/>
            <person name="Gribble S."/>
            <person name="Griffiths C."/>
            <person name="Griffiths M.N.D."/>
            <person name="Hall R."/>
            <person name="Halls K.S."/>
            <person name="Hammond S."/>
            <person name="Harley J.L."/>
            <person name="Hart E.A."/>
            <person name="Heath P.D."/>
            <person name="Heathcott R."/>
            <person name="Holmes S.J."/>
            <person name="Howden P.J."/>
            <person name="Howe K.L."/>
            <person name="Howell G.R."/>
            <person name="Huckle E."/>
            <person name="Humphray S.J."/>
            <person name="Humphries M.D."/>
            <person name="Hunt A.R."/>
            <person name="Johnson C.M."/>
            <person name="Joy A.A."/>
            <person name="Kay M."/>
            <person name="Keenan S.J."/>
            <person name="Kimberley A.M."/>
            <person name="King A."/>
            <person name="Laird G.K."/>
            <person name="Langford C."/>
            <person name="Lawlor S."/>
            <person name="Leongamornlert D.A."/>
            <person name="Leversha M."/>
            <person name="Lloyd C.R."/>
            <person name="Lloyd D.M."/>
            <person name="Loveland J.E."/>
            <person name="Lovell J."/>
            <person name="Martin S."/>
            <person name="Mashreghi-Mohammadi M."/>
            <person name="Maslen G.L."/>
            <person name="Matthews L."/>
            <person name="McCann O.T."/>
            <person name="McLaren S.J."/>
            <person name="McLay K."/>
            <person name="McMurray A."/>
            <person name="Moore M.J.F."/>
            <person name="Mullikin J.C."/>
            <person name="Niblett D."/>
            <person name="Nickerson T."/>
            <person name="Novik K.L."/>
            <person name="Oliver K."/>
            <person name="Overton-Larty E.K."/>
            <person name="Parker A."/>
            <person name="Patel R."/>
            <person name="Pearce A.V."/>
            <person name="Peck A.I."/>
            <person name="Phillimore B.J.C.T."/>
            <person name="Phillips S."/>
            <person name="Plumb R.W."/>
            <person name="Porter K.M."/>
            <person name="Ramsey Y."/>
            <person name="Ranby S.A."/>
            <person name="Rice C.M."/>
            <person name="Ross M.T."/>
            <person name="Searle S.M."/>
            <person name="Sehra H.K."/>
            <person name="Sheridan E."/>
            <person name="Skuce C.D."/>
            <person name="Smith S."/>
            <person name="Smith M."/>
            <person name="Spraggon L."/>
            <person name="Squares S.L."/>
            <person name="Steward C.A."/>
            <person name="Sycamore N."/>
            <person name="Tamlyn-Hall G."/>
            <person name="Tester J."/>
            <person name="Theaker A.J."/>
            <person name="Thomas D.W."/>
            <person name="Thorpe A."/>
            <person name="Tracey A."/>
            <person name="Tromans A."/>
            <person name="Tubby B."/>
            <person name="Wall M."/>
            <person name="Wallis J.M."/>
            <person name="West A.P."/>
            <person name="White S.S."/>
            <person name="Whitehead S.L."/>
            <person name="Whittaker H."/>
            <person name="Wild A."/>
            <person name="Willey D.J."/>
            <person name="Wilmer T.E."/>
            <person name="Wood J.M."/>
            <person name="Wray P.W."/>
            <person name="Wyatt J.C."/>
            <person name="Young L."/>
            <person name="Younger R.M."/>
            <person name="Bentley D.R."/>
            <person name="Coulson A."/>
            <person name="Durbin R.M."/>
            <person name="Hubbard T."/>
            <person name="Sulston J.E."/>
            <person name="Dunham I."/>
            <person name="Rogers J."/>
            <person name="Beck S."/>
        </authorList>
    </citation>
    <scope>NUCLEOTIDE SEQUENCE [LARGE SCALE GENOMIC DNA]</scope>
</reference>
<reference key="9">
    <citation type="submission" date="2005-07" db="EMBL/GenBank/DDBJ databases">
        <authorList>
            <person name="Mural R.J."/>
            <person name="Istrail S."/>
            <person name="Sutton G."/>
            <person name="Florea L."/>
            <person name="Halpern A.L."/>
            <person name="Mobarry C.M."/>
            <person name="Lippert R."/>
            <person name="Walenz B."/>
            <person name="Shatkay H."/>
            <person name="Dew I."/>
            <person name="Miller J.R."/>
            <person name="Flanigan M.J."/>
            <person name="Edwards N.J."/>
            <person name="Bolanos R."/>
            <person name="Fasulo D."/>
            <person name="Halldorsson B.V."/>
            <person name="Hannenhalli S."/>
            <person name="Turner R."/>
            <person name="Yooseph S."/>
            <person name="Lu F."/>
            <person name="Nusskern D.R."/>
            <person name="Shue B.C."/>
            <person name="Zheng X.H."/>
            <person name="Zhong F."/>
            <person name="Delcher A.L."/>
            <person name="Huson D.H."/>
            <person name="Kravitz S.A."/>
            <person name="Mouchard L."/>
            <person name="Reinert K."/>
            <person name="Remington K.A."/>
            <person name="Clark A.G."/>
            <person name="Waterman M.S."/>
            <person name="Eichler E.E."/>
            <person name="Adams M.D."/>
            <person name="Hunkapiller M.W."/>
            <person name="Myers E.W."/>
            <person name="Venter J.C."/>
        </authorList>
    </citation>
    <scope>NUCLEOTIDE SEQUENCE [LARGE SCALE GENOMIC DNA]</scope>
</reference>
<reference key="10">
    <citation type="journal article" date="2004" name="Genome Res.">
        <title>The status, quality, and expansion of the NIH full-length cDNA project: the Mammalian Gene Collection (MGC).</title>
        <authorList>
            <consortium name="The MGC Project Team"/>
        </authorList>
    </citation>
    <scope>NUCLEOTIDE SEQUENCE [LARGE SCALE MRNA]</scope>
    <source>
        <tissue>Placenta</tissue>
    </source>
</reference>
<reference key="11">
    <citation type="journal article" date="2002" name="RNA">
        <title>Purification and characterization of native spliceosomes suitable for three-dimensional structural analysis.</title>
        <authorList>
            <person name="Jurica M.S."/>
            <person name="Licklider L.J."/>
            <person name="Gygi S.P."/>
            <person name="Grigorieff N."/>
            <person name="Moore M.J."/>
        </authorList>
    </citation>
    <scope>IDENTIFICATION BY MASS SPECTROMETRY</scope>
    <scope>IDENTIFICATION IN THE SPLICEOSOMAL COMPLEX</scope>
    <scope>SUBCELLULAR LOCATION</scope>
    <scope>SUBUNIT</scope>
</reference>
<reference key="12">
    <citation type="journal article" date="2007" name="Science">
        <title>ATM and ATR substrate analysis reveals extensive protein networks responsive to DNA damage.</title>
        <authorList>
            <person name="Matsuoka S."/>
            <person name="Ballif B.A."/>
            <person name="Smogorzewska A."/>
            <person name="McDonald E.R. III"/>
            <person name="Hurov K.E."/>
            <person name="Luo J."/>
            <person name="Bakalarski C.E."/>
            <person name="Zhao Z."/>
            <person name="Solimini N."/>
            <person name="Lerenthal Y."/>
            <person name="Shiloh Y."/>
            <person name="Gygi S.P."/>
            <person name="Elledge S.J."/>
        </authorList>
    </citation>
    <scope>PHOSPHORYLATION [LARGE SCALE ANALYSIS] AT THR-79</scope>
    <scope>IDENTIFICATION BY MASS SPECTROMETRY [LARGE SCALE ANALYSIS]</scope>
    <source>
        <tissue>Embryonic kidney</tissue>
    </source>
</reference>
<reference key="13">
    <citation type="journal article" date="2011" name="BMC Syst. Biol.">
        <title>Initial characterization of the human central proteome.</title>
        <authorList>
            <person name="Burkard T.R."/>
            <person name="Planyavsky M."/>
            <person name="Kaupe I."/>
            <person name="Breitwieser F.P."/>
            <person name="Buerckstuemmer T."/>
            <person name="Bennett K.L."/>
            <person name="Superti-Furga G."/>
            <person name="Colinge J."/>
        </authorList>
    </citation>
    <scope>IDENTIFICATION BY MASS SPECTROMETRY [LARGE SCALE ANALYSIS]</scope>
</reference>
<reference evidence="7" key="14">
    <citation type="journal article" date="2016" name="Science">
        <title>Molecular architecture of the human U4/U6.U5 tri-snRNP.</title>
        <authorList>
            <person name="Agafonov D.E."/>
            <person name="Kastner B."/>
            <person name="Dybkov O."/>
            <person name="Hofele R.V."/>
            <person name="Liu W.T."/>
            <person name="Urlaub H."/>
            <person name="Luhrmann R."/>
            <person name="Stark H."/>
        </authorList>
    </citation>
    <scope>STRUCTURE BY ELECTRON MICROSCOPY (7.00 ANGSTROMS)</scope>
    <scope>SUBCELLULAR LOCATION</scope>
    <scope>SUBUNIT</scope>
    <scope>IDENTIFICATION BY MASS SPECTROMETRY</scope>
</reference>
<reference evidence="8" key="15">
    <citation type="journal article" date="2017" name="Cell">
        <title>Cryo-EM Structure of a Pre-catalytic Human Spliceosome Primed for Activation.</title>
        <authorList>
            <person name="Bertram K."/>
            <person name="Agafonov D.E."/>
            <person name="Dybkov O."/>
            <person name="Haselbach D."/>
            <person name="Leelaram M.N."/>
            <person name="Will C.L."/>
            <person name="Urlaub H."/>
            <person name="Kastner B."/>
            <person name="Luhrmann R."/>
            <person name="Stark H."/>
        </authorList>
    </citation>
    <scope>STRUCTURE BY ELECTRON MICROSCOPY (4.50 ANGSTROMS)</scope>
    <scope>FUNCTION</scope>
    <scope>SUBCELLULAR LOCATION</scope>
    <scope>SUBUNIT</scope>
    <scope>IDENTIFICATION BY MASS SPECTROMETRY</scope>
</reference>
<evidence type="ECO:0000255" key="1">
    <source>
        <dbReference type="PROSITE-ProRule" id="PRU01346"/>
    </source>
</evidence>
<evidence type="ECO:0000269" key="2">
    <source>
    </source>
</evidence>
<evidence type="ECO:0000269" key="3">
    <source>
    </source>
</evidence>
<evidence type="ECO:0000269" key="4">
    <source>
    </source>
</evidence>
<evidence type="ECO:0000269" key="5">
    <source>
    </source>
</evidence>
<evidence type="ECO:0000305" key="6"/>
<evidence type="ECO:0007744" key="7">
    <source>
        <dbReference type="PDB" id="3JCR"/>
    </source>
</evidence>
<evidence type="ECO:0007744" key="8">
    <source>
        <dbReference type="PDB" id="5O9Z"/>
    </source>
</evidence>
<evidence type="ECO:0007744" key="9">
    <source>
    </source>
</evidence>
<comment type="function">
    <text evidence="2 5">Plays a role in pre-mRNA splicing as component of the U4/U6-U5 tri-snRNP complex that is involved in spliceosome assembly, and as component of the precatalytic spliceosome (spliceosome B complex) (PubMed:28781166). The heptameric LSM2-8 complex binds specifically to the 3'-terminal U-tract of U6 snRNA (PubMed:10523320).</text>
</comment>
<comment type="subunit">
    <text evidence="2 3 4 5">Component of the precatalytic spliceosome (spliceosome B complex) (PubMed:11991638, PubMed:28781166). Component of the U4/U6-U5 tri-snRNP complex, a building block of the precatalytic spliceosome (spliceosome B complex) (PubMed:10523320, PubMed:26912367, PubMed:28781166). The U4/U6-U5 tri-snRNP complex is composed of the U4, U6 and U5 snRNAs and at least PRPF3, PRPF4, PRPF6, PRPF8, PRPF31, SNRNP200, TXNL4A, SNRNP40, SNRPB, SNRPD1, SNRPD2, SNRPD3, SNRPE, SNRPF, SNRPG, DDX23, CD2BP2, PPIH, SNU13, EFTUD2, SART1 and USP39, plus LSM2, LSM3, LSM4, LSM5, LSM6, LSM7 and LSM8 (PubMed:26912367). LSM2, LSM3, LSM4, LSM5, LSM6, LSM7 and LSM8 form a heptameric, ring-shaped subcomplex (the LSM2-8 complex) that is part of the U4/U6-U5 tri-snRNP complex and the precatalytic spliceosome (PubMed:10523320, PubMed:26912367, PubMed:28781166).</text>
</comment>
<comment type="interaction">
    <interactant intactId="EBI-347416">
        <id>Q9Y333</id>
    </interactant>
    <interactant intactId="EBI-744695">
        <id>Q8N9N5</id>
        <label>BANP</label>
    </interactant>
    <organismsDiffer>false</organismsDiffer>
    <experiments>3</experiments>
</comment>
<comment type="interaction">
    <interactant intactId="EBI-347416">
        <id>Q9Y333</id>
    </interactant>
    <interactant intactId="EBI-712912">
        <id>Q9HC52</id>
        <label>CBX8</label>
    </interactant>
    <organismsDiffer>false</organismsDiffer>
    <experiments>3</experiments>
</comment>
<comment type="interaction">
    <interactant intactId="EBI-347416">
        <id>Q9Y333</id>
    </interactant>
    <interactant intactId="EBI-724693">
        <id>P54105</id>
        <label>CLNS1A</label>
    </interactant>
    <organismsDiffer>false</organismsDiffer>
    <experiments>8</experiments>
</comment>
<comment type="interaction">
    <interactant intactId="EBI-347416">
        <id>Q9Y333</id>
    </interactant>
    <interactant intactId="EBI-9379658">
        <id>Q86X45</id>
        <label>DNAAF11</label>
    </interactant>
    <organismsDiffer>false</organismsDiffer>
    <experiments>3</experiments>
</comment>
<comment type="interaction">
    <interactant intactId="EBI-347416">
        <id>Q9Y333</id>
    </interactant>
    <interactant intactId="EBI-10171552">
        <id>A1A4E9</id>
        <label>KRT13</label>
    </interactant>
    <organismsDiffer>false</organismsDiffer>
    <experiments>3</experiments>
</comment>
<comment type="interaction">
    <interactant intactId="EBI-347416">
        <id>Q9Y333</id>
    </interactant>
    <interactant intactId="EBI-357504">
        <id>P47929</id>
        <label>LGALS7B</label>
    </interactant>
    <organismsDiffer>false</organismsDiffer>
    <experiments>3</experiments>
</comment>
<comment type="interaction">
    <interactant intactId="EBI-347416">
        <id>Q9Y333</id>
    </interactant>
    <interactant intactId="EBI-739832">
        <id>Q8TBB1</id>
        <label>LNX1</label>
    </interactant>
    <organismsDiffer>false</organismsDiffer>
    <experiments>3</experiments>
</comment>
<comment type="interaction">
    <interactant intactId="EBI-347416">
        <id>Q9Y333</id>
    </interactant>
    <interactant intactId="EBI-347619">
        <id>O15116</id>
        <label>LSM1</label>
    </interactant>
    <organismsDiffer>false</organismsDiffer>
    <experiments>13</experiments>
</comment>
<comment type="interaction">
    <interactant intactId="EBI-347416">
        <id>Q9Y333</id>
    </interactant>
    <interactant intactId="EBI-725133">
        <id>Q3MHD2</id>
        <label>LSM12</label>
    </interactant>
    <organismsDiffer>false</organismsDiffer>
    <experiments>3</experiments>
</comment>
<comment type="interaction">
    <interactant intactId="EBI-347416">
        <id>Q9Y333</id>
    </interactant>
    <interactant intactId="EBI-348239">
        <id>P62310</id>
        <label>LSM3</label>
    </interactant>
    <organismsDiffer>false</organismsDiffer>
    <experiments>73</experiments>
</comment>
<comment type="interaction">
    <interactant intactId="EBI-347416">
        <id>Q9Y333</id>
    </interactant>
    <interactant intactId="EBI-373310">
        <id>P62312</id>
        <label>LSM6</label>
    </interactant>
    <organismsDiffer>false</organismsDiffer>
    <experiments>9</experiments>
</comment>
<comment type="interaction">
    <interactant intactId="EBI-347416">
        <id>Q9Y333</id>
    </interactant>
    <interactant intactId="EBI-348372">
        <id>Q9UK45</id>
        <label>LSM7</label>
    </interactant>
    <organismsDiffer>false</organismsDiffer>
    <experiments>15</experiments>
</comment>
<comment type="interaction">
    <interactant intactId="EBI-347416">
        <id>Q9Y333</id>
    </interactant>
    <interactant intactId="EBI-347779">
        <id>O95777</id>
        <label>LSM8</label>
    </interactant>
    <organismsDiffer>false</organismsDiffer>
    <experiments>8</experiments>
</comment>
<comment type="interaction">
    <interactant intactId="EBI-347416">
        <id>Q9Y333</id>
    </interactant>
    <interactant intactId="EBI-1216080">
        <id>Q9Y250</id>
        <label>LZTS1</label>
    </interactant>
    <organismsDiffer>false</organismsDiffer>
    <experiments>3</experiments>
</comment>
<comment type="interaction">
    <interactant intactId="EBI-347416">
        <id>Q9Y333</id>
    </interactant>
    <interactant intactId="EBI-5651459">
        <id>P43357</id>
        <label>MAGEA3</label>
    </interactant>
    <organismsDiffer>false</organismsDiffer>
    <experiments>3</experiments>
</comment>
<comment type="interaction">
    <interactant intactId="EBI-347416">
        <id>Q9Y333</id>
    </interactant>
    <interactant intactId="EBI-1045155">
        <id>P43360</id>
        <label>MAGEA6</label>
    </interactant>
    <organismsDiffer>false</organismsDiffer>
    <experiments>6</experiments>
</comment>
<comment type="interaction">
    <interactant intactId="EBI-347416">
        <id>Q9Y333</id>
    </interactant>
    <interactant intactId="EBI-748397">
        <id>P50222</id>
        <label>MEOX2</label>
    </interactant>
    <organismsDiffer>false</organismsDiffer>
    <experiments>3</experiments>
</comment>
<comment type="interaction">
    <interactant intactId="EBI-347416">
        <id>Q9Y333</id>
    </interactant>
    <interactant intactId="EBI-2562092">
        <id>Q86TB9</id>
        <label>PATL1</label>
    </interactant>
    <organismsDiffer>false</organismsDiffer>
    <experiments>3</experiments>
</comment>
<comment type="interaction">
    <interactant intactId="EBI-347416">
        <id>Q9Y333</id>
    </interactant>
    <interactant intactId="EBI-307352">
        <id>Q04864</id>
        <label>REL</label>
    </interactant>
    <organismsDiffer>false</organismsDiffer>
    <experiments>3</experiments>
</comment>
<comment type="interaction">
    <interactant intactId="EBI-347416">
        <id>Q9Y333</id>
    </interactant>
    <interactant intactId="EBI-372475">
        <id>P14678-2</id>
        <label>SNRPB</label>
    </interactant>
    <organismsDiffer>false</organismsDiffer>
    <experiments>6</experiments>
</comment>
<comment type="interaction">
    <interactant intactId="EBI-347416">
        <id>Q9Y333</id>
    </interactant>
    <interactant intactId="EBI-297993">
        <id>P62316</id>
        <label>SNRPD2</label>
    </interactant>
    <organismsDiffer>false</organismsDiffer>
    <experiments>4</experiments>
</comment>
<comment type="interaction">
    <interactant intactId="EBI-347416">
        <id>Q9Y333</id>
    </interactant>
    <interactant intactId="EBI-348082">
        <id>P62304</id>
        <label>SNRPE</label>
    </interactant>
    <organismsDiffer>false</organismsDiffer>
    <experiments>5</experiments>
</comment>
<comment type="interaction">
    <interactant intactId="EBI-347416">
        <id>Q9Y333</id>
    </interactant>
    <interactant intactId="EBI-717810">
        <id>Q08117</id>
        <label>TLE5</label>
    </interactant>
    <organismsDiffer>false</organismsDiffer>
    <experiments>3</experiments>
</comment>
<comment type="interaction">
    <interactant intactId="EBI-347416">
        <id>Q9Y333</id>
    </interactant>
    <interactant intactId="EBI-2130429">
        <id>Q9BYV2</id>
        <label>TRIM54</label>
    </interactant>
    <organismsDiffer>false</organismsDiffer>
    <experiments>3</experiments>
</comment>
<comment type="interaction">
    <interactant intactId="EBI-347416">
        <id>Q9Y333</id>
    </interactant>
    <interactant intactId="EBI-347633">
        <id>Q9H9D4</id>
        <label>ZNF408</label>
    </interactant>
    <organismsDiffer>false</organismsDiffer>
    <experiments>4</experiments>
</comment>
<comment type="subcellular location">
    <subcellularLocation>
        <location evidence="2 3 4 5">Nucleus</location>
    </subcellularLocation>
</comment>
<comment type="similarity">
    <text evidence="6">Belongs to the snRNP Sm proteins family.</text>
</comment>